<proteinExistence type="evidence at transcript level"/>
<feature type="chain" id="PRO_0000336073" description="Leucine-rich repeat-containing protein 69">
    <location>
        <begin position="1"/>
        <end position="347"/>
    </location>
</feature>
<feature type="repeat" description="LRR 1">
    <location>
        <begin position="15"/>
        <end position="37"/>
    </location>
</feature>
<feature type="repeat" description="LRR 2">
    <location>
        <begin position="38"/>
        <end position="60"/>
    </location>
</feature>
<feature type="repeat" description="LRR 3">
    <location>
        <begin position="61"/>
        <end position="82"/>
    </location>
</feature>
<feature type="repeat" description="LRR 4">
    <location>
        <begin position="84"/>
        <end position="105"/>
    </location>
</feature>
<feature type="repeat" description="LRR 5">
    <location>
        <begin position="108"/>
        <end position="129"/>
    </location>
</feature>
<feature type="repeat" description="LRR 6">
    <location>
        <begin position="131"/>
        <end position="152"/>
    </location>
</feature>
<feature type="repeat" description="LRR 7">
    <location>
        <begin position="154"/>
        <end position="175"/>
    </location>
</feature>
<feature type="repeat" description="LRR 8">
    <location>
        <begin position="177"/>
        <end position="198"/>
    </location>
</feature>
<feature type="repeat" description="LRR 9">
    <location>
        <begin position="200"/>
        <end position="222"/>
    </location>
</feature>
<reference key="1">
    <citation type="journal article" date="2005" name="Science">
        <title>The transcriptional landscape of the mammalian genome.</title>
        <authorList>
            <person name="Carninci P."/>
            <person name="Kasukawa T."/>
            <person name="Katayama S."/>
            <person name="Gough J."/>
            <person name="Frith M.C."/>
            <person name="Maeda N."/>
            <person name="Oyama R."/>
            <person name="Ravasi T."/>
            <person name="Lenhard B."/>
            <person name="Wells C."/>
            <person name="Kodzius R."/>
            <person name="Shimokawa K."/>
            <person name="Bajic V.B."/>
            <person name="Brenner S.E."/>
            <person name="Batalov S."/>
            <person name="Forrest A.R."/>
            <person name="Zavolan M."/>
            <person name="Davis M.J."/>
            <person name="Wilming L.G."/>
            <person name="Aidinis V."/>
            <person name="Allen J.E."/>
            <person name="Ambesi-Impiombato A."/>
            <person name="Apweiler R."/>
            <person name="Aturaliya R.N."/>
            <person name="Bailey T.L."/>
            <person name="Bansal M."/>
            <person name="Baxter L."/>
            <person name="Beisel K.W."/>
            <person name="Bersano T."/>
            <person name="Bono H."/>
            <person name="Chalk A.M."/>
            <person name="Chiu K.P."/>
            <person name="Choudhary V."/>
            <person name="Christoffels A."/>
            <person name="Clutterbuck D.R."/>
            <person name="Crowe M.L."/>
            <person name="Dalla E."/>
            <person name="Dalrymple B.P."/>
            <person name="de Bono B."/>
            <person name="Della Gatta G."/>
            <person name="di Bernardo D."/>
            <person name="Down T."/>
            <person name="Engstrom P."/>
            <person name="Fagiolini M."/>
            <person name="Faulkner G."/>
            <person name="Fletcher C.F."/>
            <person name="Fukushima T."/>
            <person name="Furuno M."/>
            <person name="Futaki S."/>
            <person name="Gariboldi M."/>
            <person name="Georgii-Hemming P."/>
            <person name="Gingeras T.R."/>
            <person name="Gojobori T."/>
            <person name="Green R.E."/>
            <person name="Gustincich S."/>
            <person name="Harbers M."/>
            <person name="Hayashi Y."/>
            <person name="Hensch T.K."/>
            <person name="Hirokawa N."/>
            <person name="Hill D."/>
            <person name="Huminiecki L."/>
            <person name="Iacono M."/>
            <person name="Ikeo K."/>
            <person name="Iwama A."/>
            <person name="Ishikawa T."/>
            <person name="Jakt M."/>
            <person name="Kanapin A."/>
            <person name="Katoh M."/>
            <person name="Kawasawa Y."/>
            <person name="Kelso J."/>
            <person name="Kitamura H."/>
            <person name="Kitano H."/>
            <person name="Kollias G."/>
            <person name="Krishnan S.P."/>
            <person name="Kruger A."/>
            <person name="Kummerfeld S.K."/>
            <person name="Kurochkin I.V."/>
            <person name="Lareau L.F."/>
            <person name="Lazarevic D."/>
            <person name="Lipovich L."/>
            <person name="Liu J."/>
            <person name="Liuni S."/>
            <person name="McWilliam S."/>
            <person name="Madan Babu M."/>
            <person name="Madera M."/>
            <person name="Marchionni L."/>
            <person name="Matsuda H."/>
            <person name="Matsuzawa S."/>
            <person name="Miki H."/>
            <person name="Mignone F."/>
            <person name="Miyake S."/>
            <person name="Morris K."/>
            <person name="Mottagui-Tabar S."/>
            <person name="Mulder N."/>
            <person name="Nakano N."/>
            <person name="Nakauchi H."/>
            <person name="Ng P."/>
            <person name="Nilsson R."/>
            <person name="Nishiguchi S."/>
            <person name="Nishikawa S."/>
            <person name="Nori F."/>
            <person name="Ohara O."/>
            <person name="Okazaki Y."/>
            <person name="Orlando V."/>
            <person name="Pang K.C."/>
            <person name="Pavan W.J."/>
            <person name="Pavesi G."/>
            <person name="Pesole G."/>
            <person name="Petrovsky N."/>
            <person name="Piazza S."/>
            <person name="Reed J."/>
            <person name="Reid J.F."/>
            <person name="Ring B.Z."/>
            <person name="Ringwald M."/>
            <person name="Rost B."/>
            <person name="Ruan Y."/>
            <person name="Salzberg S.L."/>
            <person name="Sandelin A."/>
            <person name="Schneider C."/>
            <person name="Schoenbach C."/>
            <person name="Sekiguchi K."/>
            <person name="Semple C.A."/>
            <person name="Seno S."/>
            <person name="Sessa L."/>
            <person name="Sheng Y."/>
            <person name="Shibata Y."/>
            <person name="Shimada H."/>
            <person name="Shimada K."/>
            <person name="Silva D."/>
            <person name="Sinclair B."/>
            <person name="Sperling S."/>
            <person name="Stupka E."/>
            <person name="Sugiura K."/>
            <person name="Sultana R."/>
            <person name="Takenaka Y."/>
            <person name="Taki K."/>
            <person name="Tammoja K."/>
            <person name="Tan S.L."/>
            <person name="Tang S."/>
            <person name="Taylor M.S."/>
            <person name="Tegner J."/>
            <person name="Teichmann S.A."/>
            <person name="Ueda H.R."/>
            <person name="van Nimwegen E."/>
            <person name="Verardo R."/>
            <person name="Wei C.L."/>
            <person name="Yagi K."/>
            <person name="Yamanishi H."/>
            <person name="Zabarovsky E."/>
            <person name="Zhu S."/>
            <person name="Zimmer A."/>
            <person name="Hide W."/>
            <person name="Bult C."/>
            <person name="Grimmond S.M."/>
            <person name="Teasdale R.D."/>
            <person name="Liu E.T."/>
            <person name="Brusic V."/>
            <person name="Quackenbush J."/>
            <person name="Wahlestedt C."/>
            <person name="Mattick J.S."/>
            <person name="Hume D.A."/>
            <person name="Kai C."/>
            <person name="Sasaki D."/>
            <person name="Tomaru Y."/>
            <person name="Fukuda S."/>
            <person name="Kanamori-Katayama M."/>
            <person name="Suzuki M."/>
            <person name="Aoki J."/>
            <person name="Arakawa T."/>
            <person name="Iida J."/>
            <person name="Imamura K."/>
            <person name="Itoh M."/>
            <person name="Kato T."/>
            <person name="Kawaji H."/>
            <person name="Kawagashira N."/>
            <person name="Kawashima T."/>
            <person name="Kojima M."/>
            <person name="Kondo S."/>
            <person name="Konno H."/>
            <person name="Nakano K."/>
            <person name="Ninomiya N."/>
            <person name="Nishio T."/>
            <person name="Okada M."/>
            <person name="Plessy C."/>
            <person name="Shibata K."/>
            <person name="Shiraki T."/>
            <person name="Suzuki S."/>
            <person name="Tagami M."/>
            <person name="Waki K."/>
            <person name="Watahiki A."/>
            <person name="Okamura-Oho Y."/>
            <person name="Suzuki H."/>
            <person name="Kawai J."/>
            <person name="Hayashizaki Y."/>
        </authorList>
    </citation>
    <scope>NUCLEOTIDE SEQUENCE [LARGE SCALE MRNA]</scope>
    <source>
        <strain>C57BL/6J</strain>
        <tissue>Testis</tissue>
    </source>
</reference>
<reference key="2">
    <citation type="journal article" date="2009" name="PLoS Biol.">
        <title>Lineage-specific biology revealed by a finished genome assembly of the mouse.</title>
        <authorList>
            <person name="Church D.M."/>
            <person name="Goodstadt L."/>
            <person name="Hillier L.W."/>
            <person name="Zody M.C."/>
            <person name="Goldstein S."/>
            <person name="She X."/>
            <person name="Bult C.J."/>
            <person name="Agarwala R."/>
            <person name="Cherry J.L."/>
            <person name="DiCuccio M."/>
            <person name="Hlavina W."/>
            <person name="Kapustin Y."/>
            <person name="Meric P."/>
            <person name="Maglott D."/>
            <person name="Birtle Z."/>
            <person name="Marques A.C."/>
            <person name="Graves T."/>
            <person name="Zhou S."/>
            <person name="Teague B."/>
            <person name="Potamousis K."/>
            <person name="Churas C."/>
            <person name="Place M."/>
            <person name="Herschleb J."/>
            <person name="Runnheim R."/>
            <person name="Forrest D."/>
            <person name="Amos-Landgraf J."/>
            <person name="Schwartz D.C."/>
            <person name="Cheng Z."/>
            <person name="Lindblad-Toh K."/>
            <person name="Eichler E.E."/>
            <person name="Ponting C.P."/>
        </authorList>
    </citation>
    <scope>NUCLEOTIDE SEQUENCE [LARGE SCALE GENOMIC DNA]</scope>
    <source>
        <strain>C57BL/6J</strain>
    </source>
</reference>
<accession>Q9D9Q0</accession>
<name>LRC69_MOUSE</name>
<sequence>MAERLLVTALKGGKNTKILTLNGKRITKMPSTLEKLPNLKTLDLQNNSISKVCPELRTLTQLTLLNLGNNHLQEVPEEIKYLTSLKNLHLFGNRICRIAPGVFNGLHRLIMLNLNDNRLTSLPQEIGRLRSLTYLSLNRNNLTVIPKELCSLEHLSELHLNYNQIVYIPEEIKFLKNLQQLFLVRNNIEELPEEICHLEKLRVLDIAGNVIQIFPAGFQNLRLTEFYCEGNPLFLKRPFFAVQPKDLWTLREIAARFVLSLLEENDPLIMNVIESYPEVKDKLSKAKKCSICRKPFLTEWLECVYFVAPSKNWKISRNLKLIPVQTSVCSYQCFDQRDPDVFGIAQE</sequence>
<keyword id="KW-0433">Leucine-rich repeat</keyword>
<keyword id="KW-1185">Reference proteome</keyword>
<keyword id="KW-0677">Repeat</keyword>
<protein>
    <recommendedName>
        <fullName>Leucine-rich repeat-containing protein 69</fullName>
    </recommendedName>
</protein>
<dbReference type="EMBL" id="AK006601">
    <property type="protein sequence ID" value="BAB24669.1"/>
    <property type="molecule type" value="mRNA"/>
</dbReference>
<dbReference type="EMBL" id="AK161371">
    <property type="protein sequence ID" value="BAE36353.1"/>
    <property type="molecule type" value="mRNA"/>
</dbReference>
<dbReference type="EMBL" id="AL772236">
    <property type="status" value="NOT_ANNOTATED_CDS"/>
    <property type="molecule type" value="Genomic_DNA"/>
</dbReference>
<dbReference type="CCDS" id="CCDS38696.1"/>
<dbReference type="RefSeq" id="NP_082775.1">
    <property type="nucleotide sequence ID" value="NM_028499.2"/>
</dbReference>
<dbReference type="SMR" id="Q9D9Q0"/>
<dbReference type="FunCoup" id="Q9D9Q0">
    <property type="interactions" value="8"/>
</dbReference>
<dbReference type="STRING" id="10090.ENSMUSP00000023917"/>
<dbReference type="PhosphoSitePlus" id="Q9D9Q0"/>
<dbReference type="SwissPalm" id="Q9D9Q0"/>
<dbReference type="PaxDb" id="10090-ENSMUSP00000023917"/>
<dbReference type="ProteomicsDB" id="252511"/>
<dbReference type="Antibodypedia" id="63550">
    <property type="antibodies" value="67 antibodies from 15 providers"/>
</dbReference>
<dbReference type="Ensembl" id="ENSMUST00000023917.8">
    <property type="protein sequence ID" value="ENSMUSP00000023917.2"/>
    <property type="gene ID" value="ENSMUSG00000023151.10"/>
</dbReference>
<dbReference type="Ensembl" id="ENSMUST00000108276.2">
    <property type="protein sequence ID" value="ENSMUSP00000103911.2"/>
    <property type="gene ID" value="ENSMUSG00000023151.10"/>
</dbReference>
<dbReference type="GeneID" id="73314"/>
<dbReference type="KEGG" id="mmu:73314"/>
<dbReference type="UCSC" id="uc008sba.1">
    <property type="organism name" value="mouse"/>
</dbReference>
<dbReference type="AGR" id="MGI:1920564"/>
<dbReference type="CTD" id="100130742"/>
<dbReference type="MGI" id="MGI:1920564">
    <property type="gene designation" value="Lrrc69"/>
</dbReference>
<dbReference type="VEuPathDB" id="HostDB:ENSMUSG00000023151"/>
<dbReference type="eggNOG" id="KOG0619">
    <property type="taxonomic scope" value="Eukaryota"/>
</dbReference>
<dbReference type="GeneTree" id="ENSGT00940000164066"/>
<dbReference type="HOGENOM" id="CLU_000288_18_15_1"/>
<dbReference type="InParanoid" id="Q9D9Q0"/>
<dbReference type="OMA" id="CFNKSGH"/>
<dbReference type="OrthoDB" id="660555at2759"/>
<dbReference type="PhylomeDB" id="Q9D9Q0"/>
<dbReference type="TreeFam" id="TF327010"/>
<dbReference type="BioGRID-ORCS" id="73314">
    <property type="hits" value="1 hit in 78 CRISPR screens"/>
</dbReference>
<dbReference type="ChiTaRS" id="Lrrc69">
    <property type="organism name" value="mouse"/>
</dbReference>
<dbReference type="PRO" id="PR:Q9D9Q0"/>
<dbReference type="Proteomes" id="UP000000589">
    <property type="component" value="Chromosome 4"/>
</dbReference>
<dbReference type="RNAct" id="Q9D9Q0">
    <property type="molecule type" value="protein"/>
</dbReference>
<dbReference type="Bgee" id="ENSMUSG00000023151">
    <property type="expression patterns" value="Expressed in seminiferous tubule of testis and 13 other cell types or tissues"/>
</dbReference>
<dbReference type="Gene3D" id="3.80.10.10">
    <property type="entry name" value="Ribonuclease Inhibitor"/>
    <property type="match status" value="2"/>
</dbReference>
<dbReference type="InterPro" id="IPR001611">
    <property type="entry name" value="Leu-rich_rpt"/>
</dbReference>
<dbReference type="InterPro" id="IPR003591">
    <property type="entry name" value="Leu-rich_rpt_typical-subtyp"/>
</dbReference>
<dbReference type="InterPro" id="IPR032675">
    <property type="entry name" value="LRR_dom_sf"/>
</dbReference>
<dbReference type="InterPro" id="IPR050216">
    <property type="entry name" value="LRR_domain-containing"/>
</dbReference>
<dbReference type="InterPro" id="IPR055414">
    <property type="entry name" value="LRR_R13L4/SHOC2-like"/>
</dbReference>
<dbReference type="PANTHER" id="PTHR48051">
    <property type="match status" value="1"/>
</dbReference>
<dbReference type="PANTHER" id="PTHR48051:SF1">
    <property type="entry name" value="RAS SUPPRESSOR PROTEIN 1"/>
    <property type="match status" value="1"/>
</dbReference>
<dbReference type="Pfam" id="PF23598">
    <property type="entry name" value="LRR_14"/>
    <property type="match status" value="1"/>
</dbReference>
<dbReference type="Pfam" id="PF13855">
    <property type="entry name" value="LRR_8"/>
    <property type="match status" value="2"/>
</dbReference>
<dbReference type="SMART" id="SM00364">
    <property type="entry name" value="LRR_BAC"/>
    <property type="match status" value="6"/>
</dbReference>
<dbReference type="SMART" id="SM00369">
    <property type="entry name" value="LRR_TYP"/>
    <property type="match status" value="8"/>
</dbReference>
<dbReference type="SUPFAM" id="SSF52058">
    <property type="entry name" value="L domain-like"/>
    <property type="match status" value="1"/>
</dbReference>
<dbReference type="PROSITE" id="PS51450">
    <property type="entry name" value="LRR"/>
    <property type="match status" value="9"/>
</dbReference>
<gene>
    <name type="primary">Lrrc69</name>
</gene>
<comment type="similarity">
    <text evidence="1">Belongs to the LRRC69 family.</text>
</comment>
<organism>
    <name type="scientific">Mus musculus</name>
    <name type="common">Mouse</name>
    <dbReference type="NCBI Taxonomy" id="10090"/>
    <lineage>
        <taxon>Eukaryota</taxon>
        <taxon>Metazoa</taxon>
        <taxon>Chordata</taxon>
        <taxon>Craniata</taxon>
        <taxon>Vertebrata</taxon>
        <taxon>Euteleostomi</taxon>
        <taxon>Mammalia</taxon>
        <taxon>Eutheria</taxon>
        <taxon>Euarchontoglires</taxon>
        <taxon>Glires</taxon>
        <taxon>Rodentia</taxon>
        <taxon>Myomorpha</taxon>
        <taxon>Muroidea</taxon>
        <taxon>Muridae</taxon>
        <taxon>Murinae</taxon>
        <taxon>Mus</taxon>
        <taxon>Mus</taxon>
    </lineage>
</organism>
<evidence type="ECO:0000305" key="1"/>